<accession>O67513</accession>
<sequence length="378" mass="42392">MRSRVPRKEIKSLAFALYDTGETILGALVVSTFFPLFITKHIDVKIYSLSYGISLLASFALAIFLGKLADENALRKKFFTLFSLLTSLFLSSIALLYGTPYLALLSFLLMLISHQQAMVFYNSLLLNFENKGFASGLGVSFGYVGSAIALIFLADKLKEPEVYAVVGLIFLILAVPSIITLENPEISAKISLKEIFGDRTFLLFLLSLLTLTEVANTLIAMMGVYLREVYSLESVEIYRIIGFSALGGVLGGIFWGVLTDKLNVNRVFPLGFFLWSFFFILLFFAKKDYLIFVGLLAGFSLAHLWSTSRVYILENFPKESVSVRMSFLSLTERVASSFGLFLWSFFLFITQDNFRLSALLMGTLPLIGFFIYLKTKLD</sequence>
<organism>
    <name type="scientific">Aquifex aeolicus (strain VF5)</name>
    <dbReference type="NCBI Taxonomy" id="224324"/>
    <lineage>
        <taxon>Bacteria</taxon>
        <taxon>Pseudomonadati</taxon>
        <taxon>Aquificota</taxon>
        <taxon>Aquificia</taxon>
        <taxon>Aquificales</taxon>
        <taxon>Aquificaceae</taxon>
        <taxon>Aquifex</taxon>
    </lineage>
</organism>
<name>Y1569_AQUAE</name>
<dbReference type="EMBL" id="AE000657">
    <property type="protein sequence ID" value="AAC07485.1"/>
    <property type="molecule type" value="Genomic_DNA"/>
</dbReference>
<dbReference type="PIR" id="G70435">
    <property type="entry name" value="G70435"/>
</dbReference>
<dbReference type="RefSeq" id="NP_214078.1">
    <property type="nucleotide sequence ID" value="NC_000918.1"/>
</dbReference>
<dbReference type="RefSeq" id="WP_010881016.1">
    <property type="nucleotide sequence ID" value="NC_000918.1"/>
</dbReference>
<dbReference type="SMR" id="O67513"/>
<dbReference type="STRING" id="224324.aq_1569"/>
<dbReference type="EnsemblBacteria" id="AAC07485">
    <property type="protein sequence ID" value="AAC07485"/>
    <property type="gene ID" value="aq_1569"/>
</dbReference>
<dbReference type="KEGG" id="aae:aq_1569"/>
<dbReference type="PATRIC" id="fig|224324.8.peg.1212"/>
<dbReference type="eggNOG" id="COG2270">
    <property type="taxonomic scope" value="Bacteria"/>
</dbReference>
<dbReference type="HOGENOM" id="CLU_743804_0_0_0"/>
<dbReference type="InParanoid" id="O67513"/>
<dbReference type="OrthoDB" id="11140at2"/>
<dbReference type="Proteomes" id="UP000000798">
    <property type="component" value="Chromosome"/>
</dbReference>
<dbReference type="GO" id="GO:0005886">
    <property type="term" value="C:plasma membrane"/>
    <property type="evidence" value="ECO:0007669"/>
    <property type="project" value="UniProtKB-SubCell"/>
</dbReference>
<dbReference type="GO" id="GO:0022857">
    <property type="term" value="F:transmembrane transporter activity"/>
    <property type="evidence" value="ECO:0007669"/>
    <property type="project" value="InterPro"/>
</dbReference>
<dbReference type="Gene3D" id="1.20.1250.20">
    <property type="entry name" value="MFS general substrate transporter like domains"/>
    <property type="match status" value="2"/>
</dbReference>
<dbReference type="InterPro" id="IPR050495">
    <property type="entry name" value="ATG22/LtaA_families"/>
</dbReference>
<dbReference type="InterPro" id="IPR011701">
    <property type="entry name" value="MFS"/>
</dbReference>
<dbReference type="InterPro" id="IPR020846">
    <property type="entry name" value="MFS_dom"/>
</dbReference>
<dbReference type="InterPro" id="IPR036259">
    <property type="entry name" value="MFS_trans_sf"/>
</dbReference>
<dbReference type="PANTHER" id="PTHR23519">
    <property type="entry name" value="AUTOPHAGY-RELATED PROTEIN 22"/>
    <property type="match status" value="1"/>
</dbReference>
<dbReference type="PANTHER" id="PTHR23519:SF1">
    <property type="entry name" value="AUTOPHAGY-RELATED PROTEIN 22"/>
    <property type="match status" value="1"/>
</dbReference>
<dbReference type="Pfam" id="PF07690">
    <property type="entry name" value="MFS_1"/>
    <property type="match status" value="1"/>
</dbReference>
<dbReference type="SUPFAM" id="SSF103473">
    <property type="entry name" value="MFS general substrate transporter"/>
    <property type="match status" value="1"/>
</dbReference>
<dbReference type="PROSITE" id="PS50850">
    <property type="entry name" value="MFS"/>
    <property type="match status" value="1"/>
</dbReference>
<proteinExistence type="predicted"/>
<evidence type="ECO:0000255" key="1"/>
<evidence type="ECO:0000305" key="2"/>
<keyword id="KW-1003">Cell membrane</keyword>
<keyword id="KW-0472">Membrane</keyword>
<keyword id="KW-1185">Reference proteome</keyword>
<keyword id="KW-0812">Transmembrane</keyword>
<keyword id="KW-1133">Transmembrane helix</keyword>
<comment type="subcellular location">
    <subcellularLocation>
        <location evidence="2">Cell membrane</location>
        <topology evidence="2">Multi-pass membrane protein</topology>
    </subcellularLocation>
</comment>
<feature type="chain" id="PRO_0000186935" description="Uncharacterized protein aq_1569">
    <location>
        <begin position="1"/>
        <end position="378"/>
    </location>
</feature>
<feature type="transmembrane region" description="Helical" evidence="1">
    <location>
        <begin position="12"/>
        <end position="34"/>
    </location>
</feature>
<feature type="transmembrane region" description="Helical" evidence="1">
    <location>
        <begin position="44"/>
        <end position="66"/>
    </location>
</feature>
<feature type="transmembrane region" description="Helical" evidence="1">
    <location>
        <begin position="92"/>
        <end position="112"/>
    </location>
</feature>
<feature type="transmembrane region" description="Helical" evidence="1">
    <location>
        <begin position="132"/>
        <end position="154"/>
    </location>
</feature>
<feature type="transmembrane region" description="Helical" evidence="1">
    <location>
        <begin position="161"/>
        <end position="180"/>
    </location>
</feature>
<feature type="transmembrane region" description="Helical" evidence="1">
    <location>
        <begin position="200"/>
        <end position="222"/>
    </location>
</feature>
<feature type="transmembrane region" description="Helical" evidence="1">
    <location>
        <begin position="235"/>
        <end position="257"/>
    </location>
</feature>
<feature type="transmembrane region" description="Helical" evidence="1">
    <location>
        <begin position="267"/>
        <end position="285"/>
    </location>
</feature>
<feature type="transmembrane region" description="Helical" evidence="1">
    <location>
        <begin position="290"/>
        <end position="312"/>
    </location>
</feature>
<feature type="transmembrane region" description="Helical" evidence="1">
    <location>
        <begin position="327"/>
        <end position="349"/>
    </location>
</feature>
<feature type="transmembrane region" description="Helical" evidence="1">
    <location>
        <begin position="356"/>
        <end position="373"/>
    </location>
</feature>
<gene>
    <name type="ordered locus">aq_1569</name>
</gene>
<reference key="1">
    <citation type="journal article" date="1998" name="Nature">
        <title>The complete genome of the hyperthermophilic bacterium Aquifex aeolicus.</title>
        <authorList>
            <person name="Deckert G."/>
            <person name="Warren P.V."/>
            <person name="Gaasterland T."/>
            <person name="Young W.G."/>
            <person name="Lenox A.L."/>
            <person name="Graham D.E."/>
            <person name="Overbeek R."/>
            <person name="Snead M.A."/>
            <person name="Keller M."/>
            <person name="Aujay M."/>
            <person name="Huber R."/>
            <person name="Feldman R.A."/>
            <person name="Short J.M."/>
            <person name="Olsen G.J."/>
            <person name="Swanson R.V."/>
        </authorList>
    </citation>
    <scope>NUCLEOTIDE SEQUENCE [LARGE SCALE GENOMIC DNA]</scope>
    <source>
        <strain>VF5</strain>
    </source>
</reference>
<protein>
    <recommendedName>
        <fullName>Uncharacterized protein aq_1569</fullName>
    </recommendedName>
</protein>